<dbReference type="EMBL" id="CU329671">
    <property type="protein sequence ID" value="CAC22606.1"/>
    <property type="molecule type" value="Genomic_DNA"/>
</dbReference>
<dbReference type="SMR" id="Q9C1X0"/>
<dbReference type="BioGRID" id="277695">
    <property type="interactions" value="58"/>
</dbReference>
<dbReference type="FunCoup" id="Q9C1X0">
    <property type="interactions" value="146"/>
</dbReference>
<dbReference type="STRING" id="284812.Q9C1X0"/>
<dbReference type="PaxDb" id="4896-SPBC713.05.1"/>
<dbReference type="EnsemblFungi" id="SPBC713.05.1">
    <property type="protein sequence ID" value="SPBC713.05.1:pep"/>
    <property type="gene ID" value="SPBC713.05"/>
</dbReference>
<dbReference type="KEGG" id="spo:2541181"/>
<dbReference type="PomBase" id="SPBC713.05"/>
<dbReference type="VEuPathDB" id="FungiDB:SPBC713.05"/>
<dbReference type="eggNOG" id="KOG0316">
    <property type="taxonomic scope" value="Eukaryota"/>
</dbReference>
<dbReference type="HOGENOM" id="CLU_000288_57_1_1"/>
<dbReference type="InParanoid" id="Q9C1X0"/>
<dbReference type="OMA" id="MCWDIRT"/>
<dbReference type="PhylomeDB" id="Q9C1X0"/>
<dbReference type="PRO" id="PR:Q9C1X0"/>
<dbReference type="Proteomes" id="UP000002485">
    <property type="component" value="Chromosome II"/>
</dbReference>
<dbReference type="GO" id="GO:0071013">
    <property type="term" value="C:catalytic step 2 spliceosome"/>
    <property type="evidence" value="ECO:0000318"/>
    <property type="project" value="GO_Central"/>
</dbReference>
<dbReference type="GO" id="GO:0005829">
    <property type="term" value="C:cytosol"/>
    <property type="evidence" value="ECO:0007005"/>
    <property type="project" value="PomBase"/>
</dbReference>
<dbReference type="GO" id="GO:0005634">
    <property type="term" value="C:nucleus"/>
    <property type="evidence" value="ECO:0007005"/>
    <property type="project" value="PomBase"/>
</dbReference>
<dbReference type="GO" id="GO:0005681">
    <property type="term" value="C:spliceosomal complex"/>
    <property type="evidence" value="ECO:0000353"/>
    <property type="project" value="PomBase"/>
</dbReference>
<dbReference type="GO" id="GO:0045292">
    <property type="term" value="P:mRNA cis splicing, via spliceosome"/>
    <property type="evidence" value="ECO:0000315"/>
    <property type="project" value="PomBase"/>
</dbReference>
<dbReference type="GO" id="GO:0000398">
    <property type="term" value="P:mRNA splicing, via spliceosome"/>
    <property type="evidence" value="ECO:0000318"/>
    <property type="project" value="GO_Central"/>
</dbReference>
<dbReference type="CDD" id="cd00200">
    <property type="entry name" value="WD40"/>
    <property type="match status" value="1"/>
</dbReference>
<dbReference type="FunFam" id="2.130.10.10:FF:000273">
    <property type="entry name" value="WD repeat domain-containing protein 83"/>
    <property type="match status" value="1"/>
</dbReference>
<dbReference type="Gene3D" id="2.130.10.10">
    <property type="entry name" value="YVTN repeat-like/Quinoprotein amine dehydrogenase"/>
    <property type="match status" value="1"/>
</dbReference>
<dbReference type="InterPro" id="IPR020472">
    <property type="entry name" value="G-protein_beta_WD-40_rep"/>
</dbReference>
<dbReference type="InterPro" id="IPR015943">
    <property type="entry name" value="WD40/YVTN_repeat-like_dom_sf"/>
</dbReference>
<dbReference type="InterPro" id="IPR019775">
    <property type="entry name" value="WD40_repeat_CS"/>
</dbReference>
<dbReference type="InterPro" id="IPR036322">
    <property type="entry name" value="WD40_repeat_dom_sf"/>
</dbReference>
<dbReference type="InterPro" id="IPR001680">
    <property type="entry name" value="WD40_rpt"/>
</dbReference>
<dbReference type="InterPro" id="IPR051980">
    <property type="entry name" value="WD_repeat_MORG1"/>
</dbReference>
<dbReference type="PANTHER" id="PTHR22842:SF3">
    <property type="entry name" value="WD REPEAT DOMAIN-CONTAINING PROTEIN 83"/>
    <property type="match status" value="1"/>
</dbReference>
<dbReference type="PANTHER" id="PTHR22842">
    <property type="entry name" value="WD40 REPEAT PROTEIN"/>
    <property type="match status" value="1"/>
</dbReference>
<dbReference type="Pfam" id="PF00400">
    <property type="entry name" value="WD40"/>
    <property type="match status" value="4"/>
</dbReference>
<dbReference type="PRINTS" id="PR00320">
    <property type="entry name" value="GPROTEINBRPT"/>
</dbReference>
<dbReference type="SMART" id="SM00320">
    <property type="entry name" value="WD40"/>
    <property type="match status" value="7"/>
</dbReference>
<dbReference type="SUPFAM" id="SSF50978">
    <property type="entry name" value="WD40 repeat-like"/>
    <property type="match status" value="1"/>
</dbReference>
<dbReference type="PROSITE" id="PS00678">
    <property type="entry name" value="WD_REPEATS_1"/>
    <property type="match status" value="2"/>
</dbReference>
<dbReference type="PROSITE" id="PS50082">
    <property type="entry name" value="WD_REPEATS_2"/>
    <property type="match status" value="4"/>
</dbReference>
<dbReference type="PROSITE" id="PS50294">
    <property type="entry name" value="WD_REPEATS_REGION"/>
    <property type="match status" value="1"/>
</dbReference>
<keyword id="KW-0963">Cytoplasm</keyword>
<keyword id="KW-0539">Nucleus</keyword>
<keyword id="KW-1185">Reference proteome</keyword>
<keyword id="KW-0677">Repeat</keyword>
<keyword id="KW-0853">WD repeat</keyword>
<feature type="chain" id="PRO_0000316566" description="Uncharacterized WD repeat-containing protein C713.05">
    <location>
        <begin position="1"/>
        <end position="297"/>
    </location>
</feature>
<feature type="repeat" description="WD 1">
    <location>
        <begin position="12"/>
        <end position="51"/>
    </location>
</feature>
<feature type="repeat" description="WD 2">
    <location>
        <begin position="54"/>
        <end position="93"/>
    </location>
</feature>
<feature type="repeat" description="WD 3">
    <location>
        <begin position="96"/>
        <end position="135"/>
    </location>
</feature>
<feature type="repeat" description="WD 4">
    <location>
        <begin position="140"/>
        <end position="177"/>
    </location>
</feature>
<feature type="repeat" description="WD 5">
    <location>
        <begin position="179"/>
        <end position="217"/>
    </location>
</feature>
<feature type="repeat" description="WD 6">
    <location>
        <begin position="222"/>
        <end position="261"/>
    </location>
</feature>
<feature type="repeat" description="WD 7">
    <location>
        <begin position="265"/>
        <end position="297"/>
    </location>
</feature>
<organism>
    <name type="scientific">Schizosaccharomyces pombe (strain 972 / ATCC 24843)</name>
    <name type="common">Fission yeast</name>
    <dbReference type="NCBI Taxonomy" id="284812"/>
    <lineage>
        <taxon>Eukaryota</taxon>
        <taxon>Fungi</taxon>
        <taxon>Dikarya</taxon>
        <taxon>Ascomycota</taxon>
        <taxon>Taphrinomycotina</taxon>
        <taxon>Schizosaccharomycetes</taxon>
        <taxon>Schizosaccharomycetales</taxon>
        <taxon>Schizosaccharomycetaceae</taxon>
        <taxon>Schizosaccharomyces</taxon>
    </lineage>
</organism>
<proteinExistence type="inferred from homology"/>
<reference key="1">
    <citation type="journal article" date="2002" name="Nature">
        <title>The genome sequence of Schizosaccharomyces pombe.</title>
        <authorList>
            <person name="Wood V."/>
            <person name="Gwilliam R."/>
            <person name="Rajandream M.A."/>
            <person name="Lyne M.H."/>
            <person name="Lyne R."/>
            <person name="Stewart A."/>
            <person name="Sgouros J.G."/>
            <person name="Peat N."/>
            <person name="Hayles J."/>
            <person name="Baker S.G."/>
            <person name="Basham D."/>
            <person name="Bowman S."/>
            <person name="Brooks K."/>
            <person name="Brown D."/>
            <person name="Brown S."/>
            <person name="Chillingworth T."/>
            <person name="Churcher C.M."/>
            <person name="Collins M."/>
            <person name="Connor R."/>
            <person name="Cronin A."/>
            <person name="Davis P."/>
            <person name="Feltwell T."/>
            <person name="Fraser A."/>
            <person name="Gentles S."/>
            <person name="Goble A."/>
            <person name="Hamlin N."/>
            <person name="Harris D.E."/>
            <person name="Hidalgo J."/>
            <person name="Hodgson G."/>
            <person name="Holroyd S."/>
            <person name="Hornsby T."/>
            <person name="Howarth S."/>
            <person name="Huckle E.J."/>
            <person name="Hunt S."/>
            <person name="Jagels K."/>
            <person name="James K.D."/>
            <person name="Jones L."/>
            <person name="Jones M."/>
            <person name="Leather S."/>
            <person name="McDonald S."/>
            <person name="McLean J."/>
            <person name="Mooney P."/>
            <person name="Moule S."/>
            <person name="Mungall K.L."/>
            <person name="Murphy L.D."/>
            <person name="Niblett D."/>
            <person name="Odell C."/>
            <person name="Oliver K."/>
            <person name="O'Neil S."/>
            <person name="Pearson D."/>
            <person name="Quail M.A."/>
            <person name="Rabbinowitsch E."/>
            <person name="Rutherford K.M."/>
            <person name="Rutter S."/>
            <person name="Saunders D."/>
            <person name="Seeger K."/>
            <person name="Sharp S."/>
            <person name="Skelton J."/>
            <person name="Simmonds M.N."/>
            <person name="Squares R."/>
            <person name="Squares S."/>
            <person name="Stevens K."/>
            <person name="Taylor K."/>
            <person name="Taylor R.G."/>
            <person name="Tivey A."/>
            <person name="Walsh S.V."/>
            <person name="Warren T."/>
            <person name="Whitehead S."/>
            <person name="Woodward J.R."/>
            <person name="Volckaert G."/>
            <person name="Aert R."/>
            <person name="Robben J."/>
            <person name="Grymonprez B."/>
            <person name="Weltjens I."/>
            <person name="Vanstreels E."/>
            <person name="Rieger M."/>
            <person name="Schaefer M."/>
            <person name="Mueller-Auer S."/>
            <person name="Gabel C."/>
            <person name="Fuchs M."/>
            <person name="Duesterhoeft A."/>
            <person name="Fritzc C."/>
            <person name="Holzer E."/>
            <person name="Moestl D."/>
            <person name="Hilbert H."/>
            <person name="Borzym K."/>
            <person name="Langer I."/>
            <person name="Beck A."/>
            <person name="Lehrach H."/>
            <person name="Reinhardt R."/>
            <person name="Pohl T.M."/>
            <person name="Eger P."/>
            <person name="Zimmermann W."/>
            <person name="Wedler H."/>
            <person name="Wambutt R."/>
            <person name="Purnelle B."/>
            <person name="Goffeau A."/>
            <person name="Cadieu E."/>
            <person name="Dreano S."/>
            <person name="Gloux S."/>
            <person name="Lelaure V."/>
            <person name="Mottier S."/>
            <person name="Galibert F."/>
            <person name="Aves S.J."/>
            <person name="Xiang Z."/>
            <person name="Hunt C."/>
            <person name="Moore K."/>
            <person name="Hurst S.M."/>
            <person name="Lucas M."/>
            <person name="Rochet M."/>
            <person name="Gaillardin C."/>
            <person name="Tallada V.A."/>
            <person name="Garzon A."/>
            <person name="Thode G."/>
            <person name="Daga R.R."/>
            <person name="Cruzado L."/>
            <person name="Jimenez J."/>
            <person name="Sanchez M."/>
            <person name="del Rey F."/>
            <person name="Benito J."/>
            <person name="Dominguez A."/>
            <person name="Revuelta J.L."/>
            <person name="Moreno S."/>
            <person name="Armstrong J."/>
            <person name="Forsburg S.L."/>
            <person name="Cerutti L."/>
            <person name="Lowe T."/>
            <person name="McCombie W.R."/>
            <person name="Paulsen I."/>
            <person name="Potashkin J."/>
            <person name="Shpakovski G.V."/>
            <person name="Ussery D."/>
            <person name="Barrell B.G."/>
            <person name="Nurse P."/>
        </authorList>
    </citation>
    <scope>NUCLEOTIDE SEQUENCE [LARGE SCALE GENOMIC DNA]</scope>
    <source>
        <strain>972 / ATCC 24843</strain>
    </source>
</reference>
<reference key="2">
    <citation type="journal article" date="2006" name="Nat. Biotechnol.">
        <title>ORFeome cloning and global analysis of protein localization in the fission yeast Schizosaccharomyces pombe.</title>
        <authorList>
            <person name="Matsuyama A."/>
            <person name="Arai R."/>
            <person name="Yashiroda Y."/>
            <person name="Shirai A."/>
            <person name="Kamata A."/>
            <person name="Sekido S."/>
            <person name="Kobayashi Y."/>
            <person name="Hashimoto A."/>
            <person name="Hamamoto M."/>
            <person name="Hiraoka Y."/>
            <person name="Horinouchi S."/>
            <person name="Yoshida M."/>
        </authorList>
    </citation>
    <scope>SUBCELLULAR LOCATION [LARGE SCALE ANALYSIS]</scope>
</reference>
<name>YN55_SCHPO</name>
<evidence type="ECO:0000269" key="1">
    <source>
    </source>
</evidence>
<evidence type="ECO:0000305" key="2"/>
<sequence length="297" mass="32956">MRLEAKTKLSSKAKEPINVVKYNRTGKYVLAAGNERVVRLWNVKSGACIHEYAGHGHEILDLDLVYDSTKFASCGGDKFIQVWDVNTGKVDRRLGGHLAQINTIRYNEDSSILASGSFDSKVRLWDCRSNSFSPIQVLADAKDSVSSIDIAEHLIVTGSTDGTLRTYDIRKGTLSSDYFSHPITSVKTSKSASFSLISSLNSSIHLLDQETGKILKSYIGLKNMEYRVRSSFNQSETIVFSGSEDGKVYLWDLENETQITSTSVVGTPIVTDISCHPTMDDFIIATVHGDLFIYQYN</sequence>
<protein>
    <recommendedName>
        <fullName>Uncharacterized WD repeat-containing protein C713.05</fullName>
    </recommendedName>
</protein>
<comment type="subcellular location">
    <subcellularLocation>
        <location evidence="1">Cytoplasm</location>
    </subcellularLocation>
    <subcellularLocation>
        <location evidence="1">Nucleus</location>
    </subcellularLocation>
</comment>
<comment type="similarity">
    <text evidence="2">Belongs to the WD repeat MORG1 family.</text>
</comment>
<accession>Q9C1X0</accession>
<gene>
    <name type="ORF">SPBC713.05</name>
</gene>